<organism>
    <name type="scientific">Podospora anserina</name>
    <name type="common">Pleurage anserina</name>
    <dbReference type="NCBI Taxonomy" id="2587412"/>
    <lineage>
        <taxon>Eukaryota</taxon>
        <taxon>Fungi</taxon>
        <taxon>Dikarya</taxon>
        <taxon>Ascomycota</taxon>
        <taxon>Pezizomycotina</taxon>
        <taxon>Sordariomycetes</taxon>
        <taxon>Sordariomycetidae</taxon>
        <taxon>Sordariales</taxon>
        <taxon>Podosporaceae</taxon>
        <taxon>Podospora</taxon>
    </lineage>
</organism>
<accession>Q01529</accession>
<keyword id="KW-0235">DNA replication</keyword>
<keyword id="KW-0238">DNA-binding</keyword>
<keyword id="KW-0239">DNA-directed DNA polymerase</keyword>
<keyword id="KW-0496">Mitochondrion</keyword>
<keyword id="KW-0548">Nucleotidyltransferase</keyword>
<keyword id="KW-0614">Plasmid</keyword>
<keyword id="KW-0808">Transferase</keyword>
<geneLocation type="mitochondrion"/>
<geneLocation type="plasmid">
    <name>pAL2-1</name>
</geneLocation>
<name>DPOM_PODAS</name>
<evidence type="ECO:0000250" key="1"/>
<evidence type="ECO:0000305" key="2"/>
<proteinExistence type="inferred from homology"/>
<reference key="1">
    <citation type="journal article" date="1992" name="Curr. Genet.">
        <title>The linear mitochondrial plasmid pAL2-1 of a long-lived Podospora anserina mutant is an invertron encoding a DNA and RNA polymerase.</title>
        <authorList>
            <person name="Hermanns J."/>
            <person name="Osiewacz H.D."/>
        </authorList>
    </citation>
    <scope>NUCLEOTIDE SEQUENCE [GENOMIC DNA]</scope>
    <source>
        <strain>AL2</strain>
    </source>
</reference>
<protein>
    <recommendedName>
        <fullName>Probable DNA polymerase</fullName>
        <ecNumber>2.7.7.7</ecNumber>
    </recommendedName>
</protein>
<dbReference type="EC" id="2.7.7.7"/>
<dbReference type="EMBL" id="X60707">
    <property type="protein sequence ID" value="CAA43117.2"/>
    <property type="molecule type" value="Genomic_DNA"/>
</dbReference>
<dbReference type="GO" id="GO:0005739">
    <property type="term" value="C:mitochondrion"/>
    <property type="evidence" value="ECO:0007669"/>
    <property type="project" value="UniProtKB-SubCell"/>
</dbReference>
<dbReference type="GO" id="GO:0003677">
    <property type="term" value="F:DNA binding"/>
    <property type="evidence" value="ECO:0007669"/>
    <property type="project" value="UniProtKB-KW"/>
</dbReference>
<dbReference type="GO" id="GO:0003887">
    <property type="term" value="F:DNA-directed DNA polymerase activity"/>
    <property type="evidence" value="ECO:0007669"/>
    <property type="project" value="UniProtKB-KW"/>
</dbReference>
<dbReference type="GO" id="GO:0000166">
    <property type="term" value="F:nucleotide binding"/>
    <property type="evidence" value="ECO:0007669"/>
    <property type="project" value="InterPro"/>
</dbReference>
<dbReference type="GO" id="GO:0006260">
    <property type="term" value="P:DNA replication"/>
    <property type="evidence" value="ECO:0007669"/>
    <property type="project" value="UniProtKB-KW"/>
</dbReference>
<dbReference type="Gene3D" id="1.10.287.690">
    <property type="entry name" value="Helix hairpin bin"/>
    <property type="match status" value="1"/>
</dbReference>
<dbReference type="Gene3D" id="3.90.1600.10">
    <property type="entry name" value="Palm domain of DNA polymerase"/>
    <property type="match status" value="2"/>
</dbReference>
<dbReference type="Gene3D" id="3.30.420.10">
    <property type="entry name" value="Ribonuclease H-like superfamily/Ribonuclease H"/>
    <property type="match status" value="1"/>
</dbReference>
<dbReference type="InterPro" id="IPR006172">
    <property type="entry name" value="DNA-dir_DNA_pol_B"/>
</dbReference>
<dbReference type="InterPro" id="IPR017964">
    <property type="entry name" value="DNA-dir_DNA_pol_B_CS"/>
</dbReference>
<dbReference type="InterPro" id="IPR004868">
    <property type="entry name" value="DNA-dir_DNA_pol_B_mt/vir"/>
</dbReference>
<dbReference type="InterPro" id="IPR015833">
    <property type="entry name" value="DNA-dir_DNA_pol_B_mt_lin_plsmd"/>
</dbReference>
<dbReference type="InterPro" id="IPR043502">
    <property type="entry name" value="DNA/RNA_pol_sf"/>
</dbReference>
<dbReference type="InterPro" id="IPR023211">
    <property type="entry name" value="DNA_pol_palm_dom_sf"/>
</dbReference>
<dbReference type="InterPro" id="IPR012337">
    <property type="entry name" value="RNaseH-like_sf"/>
</dbReference>
<dbReference type="InterPro" id="IPR036397">
    <property type="entry name" value="RNaseH_sf"/>
</dbReference>
<dbReference type="PANTHER" id="PTHR33568">
    <property type="entry name" value="DNA POLYMERASE"/>
    <property type="match status" value="1"/>
</dbReference>
<dbReference type="PANTHER" id="PTHR33568:SF3">
    <property type="entry name" value="DNA-DIRECTED DNA POLYMERASE"/>
    <property type="match status" value="1"/>
</dbReference>
<dbReference type="Pfam" id="PF03175">
    <property type="entry name" value="DNA_pol_B_2"/>
    <property type="match status" value="1"/>
</dbReference>
<dbReference type="PIRSF" id="PIRSF006517">
    <property type="entry name" value="DPol_mt_plasmid"/>
    <property type="match status" value="1"/>
</dbReference>
<dbReference type="SMART" id="SM00486">
    <property type="entry name" value="POLBc"/>
    <property type="match status" value="1"/>
</dbReference>
<dbReference type="SUPFAM" id="SSF56672">
    <property type="entry name" value="DNA/RNA polymerases"/>
    <property type="match status" value="1"/>
</dbReference>
<dbReference type="SUPFAM" id="SSF53098">
    <property type="entry name" value="Ribonuclease H-like"/>
    <property type="match status" value="1"/>
</dbReference>
<dbReference type="PROSITE" id="PS00116">
    <property type="entry name" value="DNA_POLYMERASE_B"/>
    <property type="match status" value="1"/>
</dbReference>
<comment type="catalytic activity">
    <reaction>
        <text>DNA(n) + a 2'-deoxyribonucleoside 5'-triphosphate = DNA(n+1) + diphosphate</text>
        <dbReference type="Rhea" id="RHEA:22508"/>
        <dbReference type="Rhea" id="RHEA-COMP:17339"/>
        <dbReference type="Rhea" id="RHEA-COMP:17340"/>
        <dbReference type="ChEBI" id="CHEBI:33019"/>
        <dbReference type="ChEBI" id="CHEBI:61560"/>
        <dbReference type="ChEBI" id="CHEBI:173112"/>
        <dbReference type="EC" id="2.7.7.7"/>
    </reaction>
</comment>
<comment type="subcellular location">
    <subcellularLocation>
        <location evidence="2">Mitochondrion</location>
    </subcellularLocation>
</comment>
<comment type="miscellaneous">
    <text evidence="1">This DNA polymerase requires a protein as a primer.</text>
</comment>
<comment type="similarity">
    <text evidence="2">Belongs to the DNA polymerase type-B family.</text>
</comment>
<feature type="chain" id="PRO_0000046556" description="Probable DNA polymerase">
    <location>
        <begin position="1"/>
        <end position="1197"/>
    </location>
</feature>
<sequence>MKKNNTILYYGCAAQARYASSNHGLLYSPSQAHLFNFSLARTYLNFSNGFRAFSSERKRQNSWKLSVRSIYMDSVNFTKHDFINALLKNFKQGNVYTVLVKVEYLDSSGNRAWCMLNVQKGIIYRNKSDFIELVKEFFDEVYIGYIEYMSRYHAQEVLSIQIMYILNNDSYRQYSLKNINKEKLDKNLVNVKQTKLDFSESLLPLTTNEKFYGKRLTPILDYKKQFVTSLYINGINFIKLVNKKSKDLNQEFINFDSKTRFYRYKLNEIEYIITVSNISKTETVKTIYLMTGFKFKDNILDKELTTKIFSRQIGNTTIEFDGADIINKEIKLKLPIIRLNYKPFTDLNSRIGTFDLETFRDYNSNSAVYALGFSTLSMSKTDKKTSMYYLTKDGNTSHEIIIKCINEMLSSDYRDHIYFTHNLGGYDIIFILHALKLENKIILENKLKGINTIVEDDKKIKVKKKKPISDVNKKSQNKDHYEISTILRDDRILKCVIKVKTPSGYNKITFIDSYNILPDKLDNLAKSFGTEIQKGLFPYEFVKSNTLNYVGITPSIEYYKINNEVISQELYNELIVPQWDLRKQTLHYLERDLLSLLEIINTYNHYVYKRYNVQLTESLTIARLALNIYLKRYLGDNLIPVVLNNSLFTSIKAAYYGGVAEVYRPYGKNLRYYDVNSLYPFVAKNTMPGHECKYIESKKGLKLSELFGFFYCKVTTNNQYLGLLPVHNQGLIMPNGQWYGWYFSEELKFAEVNGYNIEVIKGYQFNKIDNLFSSYVDDLYKIKANSEGSEKLITKFLLNSLLGRFGMSIFKLKTDIVSVEKAKKLAVTNYINSVKAISDTDVLISYNKEISRKLVEEHGLNYIEILNSNSKLDLEKNNSFKDVAVSISAAVTAYARIFMAQTKLDILKNGGNLYYTDTDSIVTDIDLPDNLVGSELGQFKLEFKLKEGFFISAKTYCLILEKEYIKKNKNKDTVIKAKGVFKTSLDVEKFKSLYFNKQDVEAIKSNNKTNYLEGYVNIESGIVKLKHDAYTKRSKIYDNNGLWIDTKPLNYQVSNMLEDTNSKPLNSPNNNDLCALIKYNKPCFDLIKYNKSITDLILYLPTNKAKFINYAQLESMINEAIHESDMRVANHIKMLIYSLTGILYHGKDGTMYIYSPNSKKIYIKYKKNNKWVTFWNIKYHNGYVYIKNKNKFYLYKG</sequence>